<reference key="1">
    <citation type="journal article" date="2009" name="PLoS Genet.">
        <title>Organised genome dynamics in the Escherichia coli species results in highly diverse adaptive paths.</title>
        <authorList>
            <person name="Touchon M."/>
            <person name="Hoede C."/>
            <person name="Tenaillon O."/>
            <person name="Barbe V."/>
            <person name="Baeriswyl S."/>
            <person name="Bidet P."/>
            <person name="Bingen E."/>
            <person name="Bonacorsi S."/>
            <person name="Bouchier C."/>
            <person name="Bouvet O."/>
            <person name="Calteau A."/>
            <person name="Chiapello H."/>
            <person name="Clermont O."/>
            <person name="Cruveiller S."/>
            <person name="Danchin A."/>
            <person name="Diard M."/>
            <person name="Dossat C."/>
            <person name="Karoui M.E."/>
            <person name="Frapy E."/>
            <person name="Garry L."/>
            <person name="Ghigo J.M."/>
            <person name="Gilles A.M."/>
            <person name="Johnson J."/>
            <person name="Le Bouguenec C."/>
            <person name="Lescat M."/>
            <person name="Mangenot S."/>
            <person name="Martinez-Jehanne V."/>
            <person name="Matic I."/>
            <person name="Nassif X."/>
            <person name="Oztas S."/>
            <person name="Petit M.A."/>
            <person name="Pichon C."/>
            <person name="Rouy Z."/>
            <person name="Ruf C.S."/>
            <person name="Schneider D."/>
            <person name="Tourret J."/>
            <person name="Vacherie B."/>
            <person name="Vallenet D."/>
            <person name="Medigue C."/>
            <person name="Rocha E.P.C."/>
            <person name="Denamur E."/>
        </authorList>
    </citation>
    <scope>NUCLEOTIDE SEQUENCE [LARGE SCALE GENOMIC DNA]</scope>
    <source>
        <strain>ATCC 35469 / DSM 13698 / BCRC 15582 / CCUG 18766 / IAM 14443 / JCM 21226 / LMG 7866 / NBRC 102419 / NCTC 12128 / CDC 0568-73</strain>
    </source>
</reference>
<sequence>MKYDTSELCDIYQEDVNVVEPLFSNFGGRASFGGQIITVKCFEDNGLLYDLLEQNGRGRVLVVDGGGSVRRALVDAELTRLAVQNEWEGLVIYGAVRQVDDLEELDIGIQAMAAIPVGAAGEGIGESDVRVNFGGVTFFSGDHLYADNTGIILSEDPLDIE</sequence>
<name>RRAA_ESCF3</name>
<feature type="chain" id="PRO_1000194862" description="Regulator of ribonuclease activity A">
    <location>
        <begin position="1"/>
        <end position="161"/>
    </location>
</feature>
<organism>
    <name type="scientific">Escherichia fergusonii (strain ATCC 35469 / DSM 13698 / CCUG 18766 / IAM 14443 / JCM 21226 / LMG 7866 / NBRC 102419 / NCTC 12128 / CDC 0568-73)</name>
    <dbReference type="NCBI Taxonomy" id="585054"/>
    <lineage>
        <taxon>Bacteria</taxon>
        <taxon>Pseudomonadati</taxon>
        <taxon>Pseudomonadota</taxon>
        <taxon>Gammaproteobacteria</taxon>
        <taxon>Enterobacterales</taxon>
        <taxon>Enterobacteriaceae</taxon>
        <taxon>Escherichia</taxon>
    </lineage>
</organism>
<proteinExistence type="inferred from homology"/>
<protein>
    <recommendedName>
        <fullName evidence="1">Regulator of ribonuclease activity A</fullName>
    </recommendedName>
</protein>
<accession>B7LUS5</accession>
<comment type="function">
    <text evidence="1">Globally modulates RNA abundance by binding to RNase E (Rne) and regulating its endonucleolytic activity. Can modulate Rne action in a substrate-dependent manner by altering the composition of the degradosome. Modulates RNA-binding and helicase activities of the degradosome.</text>
</comment>
<comment type="subunit">
    <text evidence="1">Homotrimer. Binds to both RNA-binding sites in the C-terminal region of Rne and to RhlB.</text>
</comment>
<comment type="subcellular location">
    <subcellularLocation>
        <location evidence="1">Cytoplasm</location>
    </subcellularLocation>
</comment>
<comment type="similarity">
    <text evidence="1">Belongs to the RraA family.</text>
</comment>
<dbReference type="EMBL" id="CU928158">
    <property type="protein sequence ID" value="CAQ91278.1"/>
    <property type="molecule type" value="Genomic_DNA"/>
</dbReference>
<dbReference type="RefSeq" id="WP_000872913.1">
    <property type="nucleotide sequence ID" value="NC_011740.1"/>
</dbReference>
<dbReference type="SMR" id="B7LUS5"/>
<dbReference type="GeneID" id="75059438"/>
<dbReference type="KEGG" id="efe:EFER_3843"/>
<dbReference type="HOGENOM" id="CLU_072626_4_0_6"/>
<dbReference type="OrthoDB" id="943692at2"/>
<dbReference type="Proteomes" id="UP000000745">
    <property type="component" value="Chromosome"/>
</dbReference>
<dbReference type="GO" id="GO:0005829">
    <property type="term" value="C:cytosol"/>
    <property type="evidence" value="ECO:0007669"/>
    <property type="project" value="TreeGrafter"/>
</dbReference>
<dbReference type="GO" id="GO:0060698">
    <property type="term" value="F:endoribonuclease inhibitor activity"/>
    <property type="evidence" value="ECO:0007669"/>
    <property type="project" value="UniProtKB-UniRule"/>
</dbReference>
<dbReference type="GO" id="GO:0019899">
    <property type="term" value="F:enzyme binding"/>
    <property type="evidence" value="ECO:0007669"/>
    <property type="project" value="UniProtKB-UniRule"/>
</dbReference>
<dbReference type="GO" id="GO:1902369">
    <property type="term" value="P:negative regulation of RNA catabolic process"/>
    <property type="evidence" value="ECO:0007669"/>
    <property type="project" value="TreeGrafter"/>
</dbReference>
<dbReference type="CDD" id="cd16841">
    <property type="entry name" value="RraA_family"/>
    <property type="match status" value="1"/>
</dbReference>
<dbReference type="FunFam" id="3.50.30.40:FF:000001">
    <property type="entry name" value="Regulator of ribonuclease activity A"/>
    <property type="match status" value="1"/>
</dbReference>
<dbReference type="Gene3D" id="3.50.30.40">
    <property type="entry name" value="Ribonuclease E inhibitor RraA/RraA-like"/>
    <property type="match status" value="1"/>
</dbReference>
<dbReference type="HAMAP" id="MF_00471">
    <property type="entry name" value="RraA"/>
    <property type="match status" value="1"/>
</dbReference>
<dbReference type="InterPro" id="IPR010203">
    <property type="entry name" value="RraA"/>
</dbReference>
<dbReference type="InterPro" id="IPR005493">
    <property type="entry name" value="RraA/RraA-like"/>
</dbReference>
<dbReference type="InterPro" id="IPR036704">
    <property type="entry name" value="RraA/RraA-like_sf"/>
</dbReference>
<dbReference type="InterPro" id="IPR014339">
    <property type="entry name" value="RraA_gpbac"/>
</dbReference>
<dbReference type="NCBIfam" id="TIGR01935">
    <property type="entry name" value="NOT-MenG"/>
    <property type="match status" value="1"/>
</dbReference>
<dbReference type="NCBIfam" id="NF006875">
    <property type="entry name" value="PRK09372.1"/>
    <property type="match status" value="1"/>
</dbReference>
<dbReference type="NCBIfam" id="TIGR02998">
    <property type="entry name" value="RraA_entero"/>
    <property type="match status" value="1"/>
</dbReference>
<dbReference type="PANTHER" id="PTHR33254">
    <property type="entry name" value="4-HYDROXY-4-METHYL-2-OXOGLUTARATE ALDOLASE 3-RELATED"/>
    <property type="match status" value="1"/>
</dbReference>
<dbReference type="PANTHER" id="PTHR33254:SF29">
    <property type="entry name" value="REGULATOR OF RIBONUCLEASE ACTIVITY A"/>
    <property type="match status" value="1"/>
</dbReference>
<dbReference type="Pfam" id="PF03737">
    <property type="entry name" value="RraA-like"/>
    <property type="match status" value="1"/>
</dbReference>
<dbReference type="SUPFAM" id="SSF89562">
    <property type="entry name" value="RraA-like"/>
    <property type="match status" value="1"/>
</dbReference>
<keyword id="KW-0963">Cytoplasm</keyword>
<gene>
    <name evidence="1" type="primary">rraA</name>
    <name type="ordered locus">EFER_3843</name>
</gene>
<evidence type="ECO:0000255" key="1">
    <source>
        <dbReference type="HAMAP-Rule" id="MF_00471"/>
    </source>
</evidence>